<organism>
    <name type="scientific">Histophilus somni (strain 2336)</name>
    <name type="common">Haemophilus somnus</name>
    <dbReference type="NCBI Taxonomy" id="228400"/>
    <lineage>
        <taxon>Bacteria</taxon>
        <taxon>Pseudomonadati</taxon>
        <taxon>Pseudomonadota</taxon>
        <taxon>Gammaproteobacteria</taxon>
        <taxon>Pasteurellales</taxon>
        <taxon>Pasteurellaceae</taxon>
        <taxon>Histophilus</taxon>
    </lineage>
</organism>
<reference key="1">
    <citation type="submission" date="2008-02" db="EMBL/GenBank/DDBJ databases">
        <title>Complete sequence of Haemophilus somnus 2336.</title>
        <authorList>
            <consortium name="US DOE Joint Genome Institute"/>
            <person name="Siddaramappa S."/>
            <person name="Duncan A.J."/>
            <person name="Challacombe J.F."/>
            <person name="Rainey D."/>
            <person name="Gillaspy A.F."/>
            <person name="Carson M."/>
            <person name="Gipson J."/>
            <person name="Gipson M."/>
            <person name="Bruce D."/>
            <person name="Detter J.C."/>
            <person name="Han C.S."/>
            <person name="Land M."/>
            <person name="Tapia R."/>
            <person name="Thompson L.S."/>
            <person name="Orvis J."/>
            <person name="Zaitshik J."/>
            <person name="Barnes G."/>
            <person name="Brettin T.S."/>
            <person name="Dyer D.W."/>
            <person name="Inzana T.J."/>
        </authorList>
    </citation>
    <scope>NUCLEOTIDE SEQUENCE [LARGE SCALE GENOMIC DNA]</scope>
    <source>
        <strain>2336</strain>
    </source>
</reference>
<feature type="chain" id="PRO_1000074123" description="Recombination protein RecR">
    <location>
        <begin position="1"/>
        <end position="201"/>
    </location>
</feature>
<feature type="domain" description="Toprim" evidence="1">
    <location>
        <begin position="81"/>
        <end position="176"/>
    </location>
</feature>
<feature type="zinc finger region" description="C4-type" evidence="1">
    <location>
        <begin position="57"/>
        <end position="72"/>
    </location>
</feature>
<dbReference type="EMBL" id="CP000947">
    <property type="protein sequence ID" value="ACA31942.1"/>
    <property type="molecule type" value="Genomic_DNA"/>
</dbReference>
<dbReference type="RefSeq" id="WP_012341172.1">
    <property type="nucleotide sequence ID" value="NC_010519.1"/>
</dbReference>
<dbReference type="SMR" id="B0UWK7"/>
<dbReference type="STRING" id="228400.HSM_0309"/>
<dbReference type="GeneID" id="31486590"/>
<dbReference type="KEGG" id="hsm:HSM_0309"/>
<dbReference type="HOGENOM" id="CLU_060739_1_2_6"/>
<dbReference type="GO" id="GO:0003677">
    <property type="term" value="F:DNA binding"/>
    <property type="evidence" value="ECO:0007669"/>
    <property type="project" value="UniProtKB-UniRule"/>
</dbReference>
<dbReference type="GO" id="GO:0008270">
    <property type="term" value="F:zinc ion binding"/>
    <property type="evidence" value="ECO:0007669"/>
    <property type="project" value="UniProtKB-KW"/>
</dbReference>
<dbReference type="GO" id="GO:0006310">
    <property type="term" value="P:DNA recombination"/>
    <property type="evidence" value="ECO:0007669"/>
    <property type="project" value="UniProtKB-UniRule"/>
</dbReference>
<dbReference type="GO" id="GO:0006281">
    <property type="term" value="P:DNA repair"/>
    <property type="evidence" value="ECO:0007669"/>
    <property type="project" value="UniProtKB-UniRule"/>
</dbReference>
<dbReference type="CDD" id="cd01025">
    <property type="entry name" value="TOPRIM_recR"/>
    <property type="match status" value="1"/>
</dbReference>
<dbReference type="FunFam" id="1.10.8.420:FF:000001">
    <property type="entry name" value="Recombination protein RecR"/>
    <property type="match status" value="1"/>
</dbReference>
<dbReference type="FunFam" id="3.40.1360.10:FF:000001">
    <property type="entry name" value="Recombination protein RecR"/>
    <property type="match status" value="1"/>
</dbReference>
<dbReference type="Gene3D" id="3.40.1360.10">
    <property type="match status" value="1"/>
</dbReference>
<dbReference type="Gene3D" id="6.10.250.240">
    <property type="match status" value="1"/>
</dbReference>
<dbReference type="Gene3D" id="1.10.8.420">
    <property type="entry name" value="RecR Domain 1"/>
    <property type="match status" value="1"/>
</dbReference>
<dbReference type="HAMAP" id="MF_00017">
    <property type="entry name" value="RecR"/>
    <property type="match status" value="1"/>
</dbReference>
<dbReference type="InterPro" id="IPR000093">
    <property type="entry name" value="DNA_Rcmb_RecR"/>
</dbReference>
<dbReference type="InterPro" id="IPR023627">
    <property type="entry name" value="Rcmb_RecR"/>
</dbReference>
<dbReference type="InterPro" id="IPR015967">
    <property type="entry name" value="Rcmb_RecR_Znf"/>
</dbReference>
<dbReference type="InterPro" id="IPR006171">
    <property type="entry name" value="TOPRIM_dom"/>
</dbReference>
<dbReference type="InterPro" id="IPR034137">
    <property type="entry name" value="TOPRIM_RecR"/>
</dbReference>
<dbReference type="NCBIfam" id="TIGR00615">
    <property type="entry name" value="recR"/>
    <property type="match status" value="1"/>
</dbReference>
<dbReference type="PANTHER" id="PTHR30446">
    <property type="entry name" value="RECOMBINATION PROTEIN RECR"/>
    <property type="match status" value="1"/>
</dbReference>
<dbReference type="PANTHER" id="PTHR30446:SF0">
    <property type="entry name" value="RECOMBINATION PROTEIN RECR"/>
    <property type="match status" value="1"/>
</dbReference>
<dbReference type="Pfam" id="PF21175">
    <property type="entry name" value="RecR_C"/>
    <property type="match status" value="1"/>
</dbReference>
<dbReference type="Pfam" id="PF21176">
    <property type="entry name" value="RecR_HhH"/>
    <property type="match status" value="1"/>
</dbReference>
<dbReference type="Pfam" id="PF02132">
    <property type="entry name" value="RecR_ZnF"/>
    <property type="match status" value="1"/>
</dbReference>
<dbReference type="Pfam" id="PF13662">
    <property type="entry name" value="Toprim_4"/>
    <property type="match status" value="1"/>
</dbReference>
<dbReference type="SMART" id="SM00493">
    <property type="entry name" value="TOPRIM"/>
    <property type="match status" value="1"/>
</dbReference>
<dbReference type="SUPFAM" id="SSF111304">
    <property type="entry name" value="Recombination protein RecR"/>
    <property type="match status" value="1"/>
</dbReference>
<dbReference type="PROSITE" id="PS01300">
    <property type="entry name" value="RECR"/>
    <property type="match status" value="1"/>
</dbReference>
<dbReference type="PROSITE" id="PS50880">
    <property type="entry name" value="TOPRIM"/>
    <property type="match status" value="1"/>
</dbReference>
<proteinExistence type="inferred from homology"/>
<evidence type="ECO:0000255" key="1">
    <source>
        <dbReference type="HAMAP-Rule" id="MF_00017"/>
    </source>
</evidence>
<name>RECR_HISS2</name>
<comment type="function">
    <text evidence="1">May play a role in DNA repair. It seems to be involved in an RecBC-independent recombinational process of DNA repair. It may act with RecF and RecO.</text>
</comment>
<comment type="similarity">
    <text evidence="1">Belongs to the RecR family.</text>
</comment>
<sequence>MQSSPLLENLIEHLRCLPGVGPKSAQRMAYHLLQRDRSGGMNLAGALTEAMSKIGHCTHCRTFTEEESCAICNNPRRQNSGFLCVVEQPSDIPAIEQTGQFSGRYFVLMGHLSPLDGIGPKEIGLDLLQKRLQHESFYEVILATNPTVEGEATANYIAEMCFQHNIKVSRIAHGIPVGGELETVDGTTLSHSLIGRREIQL</sequence>
<keyword id="KW-0227">DNA damage</keyword>
<keyword id="KW-0233">DNA recombination</keyword>
<keyword id="KW-0234">DNA repair</keyword>
<keyword id="KW-0479">Metal-binding</keyword>
<keyword id="KW-0862">Zinc</keyword>
<keyword id="KW-0863">Zinc-finger</keyword>
<accession>B0UWK7</accession>
<protein>
    <recommendedName>
        <fullName evidence="1">Recombination protein RecR</fullName>
    </recommendedName>
</protein>
<gene>
    <name evidence="1" type="primary">recR</name>
    <name type="ordered locus">HSM_0309</name>
</gene>